<reference key="1">
    <citation type="journal article" date="2011" name="Toxicon">
        <title>Diversity of conotoxin types from Conus californicus reflects a diversity of prey types and a novel evolutionary history.</title>
        <authorList>
            <person name="Elliger C.A."/>
            <person name="Richmond T.A."/>
            <person name="Lebaric Z.N."/>
            <person name="Pierce N.T."/>
            <person name="Sweedler J.V."/>
            <person name="Gilly W.F."/>
        </authorList>
    </citation>
    <scope>NUCLEOTIDE SEQUENCE [MRNA]</scope>
    <source>
        <tissue>Venom duct</tissue>
    </source>
</reference>
<organism>
    <name type="scientific">Californiconus californicus</name>
    <name type="common">California cone</name>
    <name type="synonym">Conus californicus</name>
    <dbReference type="NCBI Taxonomy" id="1736779"/>
    <lineage>
        <taxon>Eukaryota</taxon>
        <taxon>Metazoa</taxon>
        <taxon>Spiralia</taxon>
        <taxon>Lophotrochozoa</taxon>
        <taxon>Mollusca</taxon>
        <taxon>Gastropoda</taxon>
        <taxon>Caenogastropoda</taxon>
        <taxon>Neogastropoda</taxon>
        <taxon>Conoidea</taxon>
        <taxon>Conidae</taxon>
        <taxon>Californiconus</taxon>
    </lineage>
</organism>
<proteinExistence type="evidence at transcript level"/>
<dbReference type="EMBL" id="GU299519">
    <property type="protein sequence ID" value="ADB65794.1"/>
    <property type="molecule type" value="mRNA"/>
</dbReference>
<dbReference type="ConoServer" id="3994">
    <property type="toxin name" value="Cal9.2e precursor"/>
</dbReference>
<dbReference type="GO" id="GO:0005576">
    <property type="term" value="C:extracellular region"/>
    <property type="evidence" value="ECO:0007669"/>
    <property type="project" value="UniProtKB-SubCell"/>
</dbReference>
<dbReference type="GO" id="GO:0099106">
    <property type="term" value="F:ion channel regulator activity"/>
    <property type="evidence" value="ECO:0007669"/>
    <property type="project" value="UniProtKB-KW"/>
</dbReference>
<dbReference type="GO" id="GO:0090729">
    <property type="term" value="F:toxin activity"/>
    <property type="evidence" value="ECO:0007669"/>
    <property type="project" value="UniProtKB-KW"/>
</dbReference>
<feature type="propeptide" id="PRO_0000414950" evidence="4">
    <location>
        <begin position="1" status="less than"/>
        <end position="6"/>
    </location>
</feature>
<feature type="peptide" id="PRO_5000570807" description="Conotoxin Cal9.2e" evidence="4">
    <location>
        <begin position="8"/>
        <end position="53"/>
    </location>
</feature>
<feature type="disulfide bond" evidence="1">
    <location>
        <begin position="15"/>
        <end position="32"/>
    </location>
</feature>
<feature type="disulfide bond" evidence="1">
    <location>
        <begin position="20"/>
        <end position="42"/>
    </location>
</feature>
<feature type="disulfide bond" evidence="1">
    <location>
        <begin position="22"/>
        <end position="47"/>
    </location>
</feature>
<feature type="non-terminal residue">
    <location>
        <position position="1"/>
    </location>
</feature>
<sequence length="53" mass="5839">KKGVTQREDDRTFPCNSGRCACQPLDSYSYTCQSPSSSTANCKNNVCVSEADW</sequence>
<name>CU92E_CONCL</name>
<evidence type="ECO:0000250" key="1"/>
<evidence type="ECO:0000303" key="2">
    <source>
    </source>
</evidence>
<evidence type="ECO:0000305" key="3"/>
<evidence type="ECO:0000305" key="4">
    <source>
    </source>
</evidence>
<keyword id="KW-1015">Disulfide bond</keyword>
<keyword id="KW-0872">Ion channel impairing toxin</keyword>
<keyword id="KW-0528">Neurotoxin</keyword>
<keyword id="KW-0964">Secreted</keyword>
<keyword id="KW-0800">Toxin</keyword>
<accession>D2Y3T7</accession>
<protein>
    <recommendedName>
        <fullName evidence="2">Conotoxin Cal9.2e</fullName>
    </recommendedName>
</protein>
<comment type="function">
    <text evidence="3">Probable neurotoxin with unknown target. Possibly targets ion channels.</text>
</comment>
<comment type="subcellular location">
    <subcellularLocation>
        <location evidence="4">Secreted</location>
    </subcellularLocation>
</comment>
<comment type="tissue specificity">
    <text evidence="4">Expressed by the venom duct.</text>
</comment>
<comment type="domain">
    <text>The cysteine framework is IX (C-C-C-C-C-C).</text>
</comment>